<name>RSIX_BACSU</name>
<organism>
    <name type="scientific">Bacillus subtilis (strain 168)</name>
    <dbReference type="NCBI Taxonomy" id="224308"/>
    <lineage>
        <taxon>Bacteria</taxon>
        <taxon>Bacillati</taxon>
        <taxon>Bacillota</taxon>
        <taxon>Bacilli</taxon>
        <taxon>Bacillales</taxon>
        <taxon>Bacillaceae</taxon>
        <taxon>Bacillus</taxon>
    </lineage>
</organism>
<reference key="1">
    <citation type="journal article" date="1993" name="Mol. Microbiol.">
        <title>The organization of the Bacillus subtilis 168 chromosome region between the spoVA and serA genetic loci, based on sequence data.</title>
        <authorList>
            <person name="Sorokin A.V."/>
            <person name="Zumstein E."/>
            <person name="Azevedo V."/>
            <person name="Ehrlich S.D."/>
            <person name="Serror P."/>
        </authorList>
    </citation>
    <scope>NUCLEOTIDE SEQUENCE [GENOMIC DNA]</scope>
    <source>
        <strain>168 / Marburg / ATCC 6051 / DSM 10 / JCM 1465 / NBRC 13719 / NCIMB 3610 / NRRL NRS-744 / VKM B-501</strain>
    </source>
</reference>
<reference key="2">
    <citation type="journal article" date="1997" name="Nature">
        <title>The complete genome sequence of the Gram-positive bacterium Bacillus subtilis.</title>
        <authorList>
            <person name="Kunst F."/>
            <person name="Ogasawara N."/>
            <person name="Moszer I."/>
            <person name="Albertini A.M."/>
            <person name="Alloni G."/>
            <person name="Azevedo V."/>
            <person name="Bertero M.G."/>
            <person name="Bessieres P."/>
            <person name="Bolotin A."/>
            <person name="Borchert S."/>
            <person name="Borriss R."/>
            <person name="Boursier L."/>
            <person name="Brans A."/>
            <person name="Braun M."/>
            <person name="Brignell S.C."/>
            <person name="Bron S."/>
            <person name="Brouillet S."/>
            <person name="Bruschi C.V."/>
            <person name="Caldwell B."/>
            <person name="Capuano V."/>
            <person name="Carter N.M."/>
            <person name="Choi S.-K."/>
            <person name="Codani J.-J."/>
            <person name="Connerton I.F."/>
            <person name="Cummings N.J."/>
            <person name="Daniel R.A."/>
            <person name="Denizot F."/>
            <person name="Devine K.M."/>
            <person name="Duesterhoeft A."/>
            <person name="Ehrlich S.D."/>
            <person name="Emmerson P.T."/>
            <person name="Entian K.-D."/>
            <person name="Errington J."/>
            <person name="Fabret C."/>
            <person name="Ferrari E."/>
            <person name="Foulger D."/>
            <person name="Fritz C."/>
            <person name="Fujita M."/>
            <person name="Fujita Y."/>
            <person name="Fuma S."/>
            <person name="Galizzi A."/>
            <person name="Galleron N."/>
            <person name="Ghim S.-Y."/>
            <person name="Glaser P."/>
            <person name="Goffeau A."/>
            <person name="Golightly E.J."/>
            <person name="Grandi G."/>
            <person name="Guiseppi G."/>
            <person name="Guy B.J."/>
            <person name="Haga K."/>
            <person name="Haiech J."/>
            <person name="Harwood C.R."/>
            <person name="Henaut A."/>
            <person name="Hilbert H."/>
            <person name="Holsappel S."/>
            <person name="Hosono S."/>
            <person name="Hullo M.-F."/>
            <person name="Itaya M."/>
            <person name="Jones L.-M."/>
            <person name="Joris B."/>
            <person name="Karamata D."/>
            <person name="Kasahara Y."/>
            <person name="Klaerr-Blanchard M."/>
            <person name="Klein C."/>
            <person name="Kobayashi Y."/>
            <person name="Koetter P."/>
            <person name="Koningstein G."/>
            <person name="Krogh S."/>
            <person name="Kumano M."/>
            <person name="Kurita K."/>
            <person name="Lapidus A."/>
            <person name="Lardinois S."/>
            <person name="Lauber J."/>
            <person name="Lazarevic V."/>
            <person name="Lee S.-M."/>
            <person name="Levine A."/>
            <person name="Liu H."/>
            <person name="Masuda S."/>
            <person name="Mauel C."/>
            <person name="Medigue C."/>
            <person name="Medina N."/>
            <person name="Mellado R.P."/>
            <person name="Mizuno M."/>
            <person name="Moestl D."/>
            <person name="Nakai S."/>
            <person name="Noback M."/>
            <person name="Noone D."/>
            <person name="O'Reilly M."/>
            <person name="Ogawa K."/>
            <person name="Ogiwara A."/>
            <person name="Oudega B."/>
            <person name="Park S.-H."/>
            <person name="Parro V."/>
            <person name="Pohl T.M."/>
            <person name="Portetelle D."/>
            <person name="Porwollik S."/>
            <person name="Prescott A.M."/>
            <person name="Presecan E."/>
            <person name="Pujic P."/>
            <person name="Purnelle B."/>
            <person name="Rapoport G."/>
            <person name="Rey M."/>
            <person name="Reynolds S."/>
            <person name="Rieger M."/>
            <person name="Rivolta C."/>
            <person name="Rocha E."/>
            <person name="Roche B."/>
            <person name="Rose M."/>
            <person name="Sadaie Y."/>
            <person name="Sato T."/>
            <person name="Scanlan E."/>
            <person name="Schleich S."/>
            <person name="Schroeter R."/>
            <person name="Scoffone F."/>
            <person name="Sekiguchi J."/>
            <person name="Sekowska A."/>
            <person name="Seror S.J."/>
            <person name="Serror P."/>
            <person name="Shin B.-S."/>
            <person name="Soldo B."/>
            <person name="Sorokin A."/>
            <person name="Tacconi E."/>
            <person name="Takagi T."/>
            <person name="Takahashi H."/>
            <person name="Takemaru K."/>
            <person name="Takeuchi M."/>
            <person name="Tamakoshi A."/>
            <person name="Tanaka T."/>
            <person name="Terpstra P."/>
            <person name="Tognoni A."/>
            <person name="Tosato V."/>
            <person name="Uchiyama S."/>
            <person name="Vandenbol M."/>
            <person name="Vannier F."/>
            <person name="Vassarotti A."/>
            <person name="Viari A."/>
            <person name="Wambutt R."/>
            <person name="Wedler E."/>
            <person name="Wedler H."/>
            <person name="Weitzenegger T."/>
            <person name="Winters P."/>
            <person name="Wipat A."/>
            <person name="Yamamoto H."/>
            <person name="Yamane K."/>
            <person name="Yasumoto K."/>
            <person name="Yata K."/>
            <person name="Yoshida K."/>
            <person name="Yoshikawa H.-F."/>
            <person name="Zumstein E."/>
            <person name="Yoshikawa H."/>
            <person name="Danchin A."/>
        </authorList>
    </citation>
    <scope>NUCLEOTIDE SEQUENCE [LARGE SCALE GENOMIC DNA]</scope>
    <source>
        <strain>168</strain>
    </source>
</reference>
<reference key="3">
    <citation type="journal article" date="2009" name="Microbiology">
        <title>From a consortium sequence to a unified sequence: the Bacillus subtilis 168 reference genome a decade later.</title>
        <authorList>
            <person name="Barbe V."/>
            <person name="Cruveiller S."/>
            <person name="Kunst F."/>
            <person name="Lenoble P."/>
            <person name="Meurice G."/>
            <person name="Sekowska A."/>
            <person name="Vallenet D."/>
            <person name="Wang T."/>
            <person name="Moszer I."/>
            <person name="Medigue C."/>
            <person name="Danchin A."/>
        </authorList>
    </citation>
    <scope>SEQUENCE REVISION TO 304</scope>
</reference>
<reference key="4">
    <citation type="journal article" date="1997" name="Mol. Gen. Genet.">
        <title>SigX of Bacillus subtilis replaces the ECF sigma factor fecI of Escherichia coli and is inhibited by RsiX.</title>
        <authorList>
            <person name="Brutsche S."/>
            <person name="Braun V."/>
        </authorList>
    </citation>
    <scope>CHARACTERIZATION</scope>
</reference>
<reference key="5">
    <citation type="journal article" date="2012" name="Mol. Microbiol.">
        <title>Analysis of the role of Bacillus subtilis sigma(M) in beta-lactam resistance reveals an essential role for c-di-AMP in peptidoglycan homeostasis.</title>
        <authorList>
            <person name="Luo Y."/>
            <person name="Helmann J.D."/>
        </authorList>
    </citation>
    <scope>DISRUPTION PHENOTYPE</scope>
    <source>
        <strain>168</strain>
    </source>
</reference>
<accession>P35166</accession>
<feature type="chain" id="PRO_0000097486" description="Anti-sigma-X factor RsiX">
    <location>
        <begin position="1"/>
        <end position="368"/>
    </location>
</feature>
<feature type="region of interest" description="Disordered" evidence="1">
    <location>
        <begin position="73"/>
        <end position="101"/>
    </location>
</feature>
<feature type="compositionally biased region" description="Polar residues" evidence="1">
    <location>
        <begin position="73"/>
        <end position="87"/>
    </location>
</feature>
<feature type="sequence conflict" description="In Ref. 1; AAA67500." evidence="4" ref="1">
    <original>I</original>
    <variation>M</variation>
    <location>
        <position position="304"/>
    </location>
</feature>
<comment type="function">
    <text evidence="3">The anti-sigma factor for extracytoplasmic function (ECF) sigma factor SigX, inhibits SigX activity and stabilizes it.</text>
</comment>
<comment type="subcellular location">
    <subcellularLocation>
        <location>Cell membrane</location>
        <topology>Peripheral membrane protein</topology>
    </subcellularLocation>
</comment>
<comment type="disruption phenotype">
    <text evidence="2">Insertion mutations in this gene partially restore antibiotic resistance to the beta-lactam antibiotic cefuroxime (CEF) in a sigM deletion mutant (PubMed:22211522).</text>
</comment>
<proteinExistence type="evidence at protein level"/>
<protein>
    <recommendedName>
        <fullName>Anti-sigma-X factor RsiX</fullName>
    </recommendedName>
    <alternativeName>
        <fullName>Sigma-X negative effector</fullName>
    </alternativeName>
</protein>
<gene>
    <name type="primary">rsiX</name>
    <name type="synonym">ypuN</name>
    <name type="ordered locus">BSU23090</name>
</gene>
<sequence>MMKSEWNEEQIKELLSQLPAVKDHRSPQDIYKRLTMAKRKNKPAVRWIGPACAAAIAVYIAFIISPHFFDQAQPQQKEASQENAVTKTETEDSPKAASSLDQTSFVVPEKEQDNYITVAVADADTSAIIPVSIQKTNADQTIQDMLFESSELGILDHAITIPTFIDEVEIKEKPKQKELSIRVHQPATAFSIKDDTLLKKLLKESLKWSPYEKVKFLSDQNETGVRIGSYGTFTEISIPKQSKRSYYLYQNKQGQDFLVPSNHSFDTVKEAIKEMESSSQEDTTPLIQAGAVQSVTKKQKHLYIRFSKESEVDDSIAGILMIEGLLLTAKEFGFTEVTFTETRTKKIGKYDISDAIPVPAAPNPISLN</sequence>
<evidence type="ECO:0000256" key="1">
    <source>
        <dbReference type="SAM" id="MobiDB-lite"/>
    </source>
</evidence>
<evidence type="ECO:0000269" key="2">
    <source>
    </source>
</evidence>
<evidence type="ECO:0000269" key="3">
    <source>
    </source>
</evidence>
<evidence type="ECO:0000305" key="4"/>
<dbReference type="EMBL" id="L09228">
    <property type="protein sequence ID" value="AAA67500.1"/>
    <property type="molecule type" value="Genomic_DNA"/>
</dbReference>
<dbReference type="EMBL" id="AL009126">
    <property type="protein sequence ID" value="CAB14241.2"/>
    <property type="molecule type" value="Genomic_DNA"/>
</dbReference>
<dbReference type="PIR" id="S45562">
    <property type="entry name" value="S45562"/>
</dbReference>
<dbReference type="RefSeq" id="NP_390190.2">
    <property type="nucleotide sequence ID" value="NC_000964.3"/>
</dbReference>
<dbReference type="RefSeq" id="WP_009967642.1">
    <property type="nucleotide sequence ID" value="NZ_OZ025638.1"/>
</dbReference>
<dbReference type="SMR" id="P35166"/>
<dbReference type="FunCoup" id="P35166">
    <property type="interactions" value="67"/>
</dbReference>
<dbReference type="IntAct" id="P35166">
    <property type="interactions" value="1"/>
</dbReference>
<dbReference type="STRING" id="224308.BSU23090"/>
<dbReference type="PaxDb" id="224308-BSU23090"/>
<dbReference type="EnsemblBacteria" id="CAB14241">
    <property type="protein sequence ID" value="CAB14241"/>
    <property type="gene ID" value="BSU_23090"/>
</dbReference>
<dbReference type="GeneID" id="938959"/>
<dbReference type="KEGG" id="bsu:BSU23090"/>
<dbReference type="PATRIC" id="fig|224308.179.peg.2516"/>
<dbReference type="eggNOG" id="ENOG50331H4">
    <property type="taxonomic scope" value="Bacteria"/>
</dbReference>
<dbReference type="InParanoid" id="P35166"/>
<dbReference type="OrthoDB" id="2965336at2"/>
<dbReference type="BioCyc" id="BSUB:BSU23090-MONOMER"/>
<dbReference type="Proteomes" id="UP000001570">
    <property type="component" value="Chromosome"/>
</dbReference>
<dbReference type="GO" id="GO:0005886">
    <property type="term" value="C:plasma membrane"/>
    <property type="evidence" value="ECO:0007669"/>
    <property type="project" value="UniProtKB-SubCell"/>
</dbReference>
<keyword id="KW-1003">Cell membrane</keyword>
<keyword id="KW-0472">Membrane</keyword>
<keyword id="KW-1185">Reference proteome</keyword>
<keyword id="KW-0678">Repressor</keyword>
<keyword id="KW-0804">Transcription</keyword>
<keyword id="KW-0805">Transcription regulation</keyword>